<evidence type="ECO:0000250" key="1"/>
<evidence type="ECO:0000255" key="2"/>
<reference key="1">
    <citation type="journal article" date="2002" name="Proc. Natl. Acad. Sci. U.S.A.">
        <title>Extensive mosaic structure revealed by the complete genome sequence of uropathogenic Escherichia coli.</title>
        <authorList>
            <person name="Welch R.A."/>
            <person name="Burland V."/>
            <person name="Plunkett G. III"/>
            <person name="Redford P."/>
            <person name="Roesch P."/>
            <person name="Rasko D."/>
            <person name="Buckles E.L."/>
            <person name="Liou S.-R."/>
            <person name="Boutin A."/>
            <person name="Hackett J."/>
            <person name="Stroud D."/>
            <person name="Mayhew G.F."/>
            <person name="Rose D.J."/>
            <person name="Zhou S."/>
            <person name="Schwartz D.C."/>
            <person name="Perna N.T."/>
            <person name="Mobley H.L.T."/>
            <person name="Donnenberg M.S."/>
            <person name="Blattner F.R."/>
        </authorList>
    </citation>
    <scope>NUCLEOTIDE SEQUENCE [LARGE SCALE GENOMIC DNA]</scope>
    <source>
        <strain>CFT073 / ATCC 700928 / UPEC</strain>
    </source>
</reference>
<keyword id="KW-0997">Cell inner membrane</keyword>
<keyword id="KW-1003">Cell membrane</keyword>
<keyword id="KW-0472">Membrane</keyword>
<keyword id="KW-1185">Reference proteome</keyword>
<keyword id="KW-0812">Transmembrane</keyword>
<keyword id="KW-1133">Transmembrane helix</keyword>
<organism>
    <name type="scientific">Escherichia coli O6:H1 (strain CFT073 / ATCC 700928 / UPEC)</name>
    <dbReference type="NCBI Taxonomy" id="199310"/>
    <lineage>
        <taxon>Bacteria</taxon>
        <taxon>Pseudomonadati</taxon>
        <taxon>Pseudomonadota</taxon>
        <taxon>Gammaproteobacteria</taxon>
        <taxon>Enterobacterales</taxon>
        <taxon>Enterobacteriaceae</taxon>
        <taxon>Escherichia</taxon>
    </lineage>
</organism>
<accession>P0ADL7</accession>
<accession>P31444</accession>
<gene>
    <name type="primary">yidG</name>
    <name type="ordered locus">c4599</name>
</gene>
<comment type="subcellular location">
    <subcellularLocation>
        <location evidence="1">Cell inner membrane</location>
        <topology evidence="1">Multi-pass membrane protein</topology>
    </subcellularLocation>
</comment>
<feature type="chain" id="PRO_0000169626" description="Inner membrane protein YidG">
    <location>
        <begin position="1"/>
        <end position="120"/>
    </location>
</feature>
<feature type="topological domain" description="Cytoplasmic" evidence="2">
    <location>
        <begin position="1"/>
        <end position="21"/>
    </location>
</feature>
<feature type="transmembrane region" description="Helical" evidence="2">
    <location>
        <begin position="22"/>
        <end position="39"/>
    </location>
</feature>
<feature type="topological domain" description="Periplasmic" evidence="2">
    <location>
        <begin position="40"/>
        <end position="48"/>
    </location>
</feature>
<feature type="transmembrane region" description="Helical" evidence="2">
    <location>
        <begin position="49"/>
        <end position="68"/>
    </location>
</feature>
<feature type="topological domain" description="Cytoplasmic" evidence="2">
    <location>
        <begin position="69"/>
        <end position="90"/>
    </location>
</feature>
<feature type="transmembrane region" description="Helical" evidence="2">
    <location>
        <begin position="91"/>
        <end position="113"/>
    </location>
</feature>
<feature type="topological domain" description="Periplasmic" evidence="2">
    <location>
        <begin position="114"/>
        <end position="120"/>
    </location>
</feature>
<dbReference type="EMBL" id="AE014075">
    <property type="protein sequence ID" value="AAN83034.1"/>
    <property type="molecule type" value="Genomic_DNA"/>
</dbReference>
<dbReference type="RefSeq" id="WP_001113432.1">
    <property type="nucleotide sequence ID" value="NZ_CP051263.1"/>
</dbReference>
<dbReference type="STRING" id="199310.c4599"/>
<dbReference type="KEGG" id="ecc:c4599"/>
<dbReference type="eggNOG" id="ENOG5031J0W">
    <property type="taxonomic scope" value="Bacteria"/>
</dbReference>
<dbReference type="HOGENOM" id="CLU_150487_2_0_6"/>
<dbReference type="BioCyc" id="ECOL199310:C4599-MONOMER"/>
<dbReference type="Proteomes" id="UP000001410">
    <property type="component" value="Chromosome"/>
</dbReference>
<dbReference type="GO" id="GO:0005886">
    <property type="term" value="C:plasma membrane"/>
    <property type="evidence" value="ECO:0007669"/>
    <property type="project" value="UniProtKB-SubCell"/>
</dbReference>
<dbReference type="InterPro" id="IPR003807">
    <property type="entry name" value="DUF202"/>
</dbReference>
<dbReference type="Pfam" id="PF02656">
    <property type="entry name" value="DUF202"/>
    <property type="match status" value="1"/>
</dbReference>
<name>YIDG_ECOL6</name>
<sequence length="120" mass="13768">MPDSRKARRIADPGLQPERTSLAWFRTMLGYGALMALAIKHNWHQAGMLFWISIGILAIVALILWHYTRNRNLMDVTNSDFSQFHVVRDKFLISLAVLSLAILFAVTHIHQLIVFIERVA</sequence>
<proteinExistence type="inferred from homology"/>
<protein>
    <recommendedName>
        <fullName>Inner membrane protein YidG</fullName>
    </recommendedName>
</protein>